<reference key="1">
    <citation type="journal article" date="1989" name="Proc. Natl. Acad. Sci. U.S.A.">
        <title>Isolation of a complementary DNA encoding a chitinase with structural homology to a bifunctional lysozyme/chitinase.</title>
        <authorList>
            <person name="Metraux J.P."/>
            <person name="Burkhart W."/>
            <person name="Moyer M."/>
            <person name="Dincher S."/>
            <person name="Middlesteadt W."/>
            <person name="Williams S."/>
            <person name="Payne G."/>
            <person name="Carnes M."/>
            <person name="Ryals J."/>
        </authorList>
    </citation>
    <scope>NUCLEOTIDE SEQUENCE [MRNA]</scope>
    <scope>PARTIAL PROTEIN SEQUENCE</scope>
    <source>
        <strain>cv. Wisconsin SMR-58</strain>
    </source>
</reference>
<reference key="2">
    <citation type="journal article" date="1994" name="Mol. Plant Microbe Interact.">
        <title>Regulation of cucumber class III chitinase gene expression.</title>
        <authorList>
            <person name="Lawton K."/>
            <person name="Beck J."/>
            <person name="Potter S."/>
            <person name="Ward E."/>
            <person name="Ryals J."/>
        </authorList>
    </citation>
    <scope>NUCLEOTIDE SEQUENCE</scope>
    <source>
        <tissue>Leaf</tissue>
    </source>
</reference>
<keyword id="KW-0119">Carbohydrate metabolism</keyword>
<keyword id="KW-0146">Chitin degradation</keyword>
<keyword id="KW-0903">Direct protein sequencing</keyword>
<keyword id="KW-1015">Disulfide bond</keyword>
<keyword id="KW-0326">Glycosidase</keyword>
<keyword id="KW-0378">Hydrolase</keyword>
<keyword id="KW-0624">Polysaccharide degradation</keyword>
<keyword id="KW-0964">Secreted</keyword>
<keyword id="KW-0732">Signal</keyword>
<proteinExistence type="evidence at protein level"/>
<name>CHIA_CUCSA</name>
<protein>
    <recommendedName>
        <fullName>Acidic endochitinase</fullName>
        <ecNumber>3.2.1.14</ecNumber>
    </recommendedName>
</protein>
<dbReference type="EC" id="3.2.1.14"/>
<dbReference type="EMBL" id="M24365">
    <property type="protein sequence ID" value="AAA33120.1"/>
    <property type="molecule type" value="mRNA"/>
</dbReference>
<dbReference type="EMBL" id="M84214">
    <property type="protein sequence ID" value="AAC37395.1"/>
    <property type="molecule type" value="Unassigned_DNA"/>
</dbReference>
<dbReference type="PIR" id="A31455">
    <property type="entry name" value="A31455"/>
</dbReference>
<dbReference type="SMR" id="P17541"/>
<dbReference type="CAZy" id="GH18">
    <property type="family name" value="Glycoside Hydrolase Family 18"/>
</dbReference>
<dbReference type="eggNOG" id="KOG4701">
    <property type="taxonomic scope" value="Eukaryota"/>
</dbReference>
<dbReference type="GO" id="GO:0005576">
    <property type="term" value="C:extracellular region"/>
    <property type="evidence" value="ECO:0007669"/>
    <property type="project" value="UniProtKB-SubCell"/>
</dbReference>
<dbReference type="GO" id="GO:0008843">
    <property type="term" value="F:endochitinase activity"/>
    <property type="evidence" value="ECO:0007669"/>
    <property type="project" value="UniProtKB-EC"/>
</dbReference>
<dbReference type="GO" id="GO:0006032">
    <property type="term" value="P:chitin catabolic process"/>
    <property type="evidence" value="ECO:0007669"/>
    <property type="project" value="UniProtKB-KW"/>
</dbReference>
<dbReference type="GO" id="GO:0000272">
    <property type="term" value="P:polysaccharide catabolic process"/>
    <property type="evidence" value="ECO:0007669"/>
    <property type="project" value="UniProtKB-KW"/>
</dbReference>
<dbReference type="CDD" id="cd02877">
    <property type="entry name" value="GH18_hevamine_XipI_class_III"/>
    <property type="match status" value="1"/>
</dbReference>
<dbReference type="FunFam" id="3.20.20.80:FF:000015">
    <property type="entry name" value="Acidic endochitinase SE2"/>
    <property type="match status" value="1"/>
</dbReference>
<dbReference type="Gene3D" id="3.20.20.80">
    <property type="entry name" value="Glycosidases"/>
    <property type="match status" value="1"/>
</dbReference>
<dbReference type="InterPro" id="IPR045321">
    <property type="entry name" value="Cts1-like"/>
</dbReference>
<dbReference type="InterPro" id="IPR001223">
    <property type="entry name" value="Glyco_hydro18_cat"/>
</dbReference>
<dbReference type="InterPro" id="IPR001579">
    <property type="entry name" value="Glyco_hydro_18_chit_AS"/>
</dbReference>
<dbReference type="InterPro" id="IPR017853">
    <property type="entry name" value="Glycoside_hydrolase_SF"/>
</dbReference>
<dbReference type="InterPro" id="IPR050542">
    <property type="entry name" value="Glycosyl_Hydrlase18_Chitinase"/>
</dbReference>
<dbReference type="PANTHER" id="PTHR45708:SF22">
    <property type="entry name" value="ACIDIC ENDOCHITINASE"/>
    <property type="match status" value="1"/>
</dbReference>
<dbReference type="PANTHER" id="PTHR45708">
    <property type="entry name" value="ENDOCHITINASE"/>
    <property type="match status" value="1"/>
</dbReference>
<dbReference type="Pfam" id="PF00704">
    <property type="entry name" value="Glyco_hydro_18"/>
    <property type="match status" value="1"/>
</dbReference>
<dbReference type="SUPFAM" id="SSF51445">
    <property type="entry name" value="(Trans)glycosidases"/>
    <property type="match status" value="1"/>
</dbReference>
<dbReference type="PROSITE" id="PS01095">
    <property type="entry name" value="GH18_1"/>
    <property type="match status" value="1"/>
</dbReference>
<dbReference type="PROSITE" id="PS51910">
    <property type="entry name" value="GH18_2"/>
    <property type="match status" value="1"/>
</dbReference>
<accession>P17541</accession>
<sequence length="292" mass="30774">MAAHKITTTLSIFFLLSSIFRSSDAAGIAIYWGQNGNEGSLASTCATGNYEFVNIAFLSSFGSGQAPVLNLAGHCNPDNNGCAFLSDEINSCKSQNVKVLLSIGGGAGSYSLSSADDAKQVANFIWNSYLGGQSDSRPLGAAVLDGVDFDIESGSGQFWDVLAQELKNFGQVILSAAPQCPIPDAHLDAAIKTGLFDSVWVQFYNNPPCMFADNADNLLSSWNQWTAFPTSKLYMGLPAAREAAPSGGFIPADVLISQVLPTIKASSNYGGVMLWSKAFDNGYSDSIKGSIG</sequence>
<feature type="signal peptide">
    <location>
        <begin position="1"/>
        <end position="25"/>
    </location>
</feature>
<feature type="chain" id="PRO_0000011916" description="Acidic endochitinase">
    <location>
        <begin position="26"/>
        <end position="292"/>
    </location>
</feature>
<feature type="domain" description="GH18" evidence="2">
    <location>
        <begin position="26"/>
        <end position="292"/>
    </location>
</feature>
<feature type="active site" description="Proton donor" evidence="2">
    <location>
        <position position="152"/>
    </location>
</feature>
<feature type="disulfide bond" evidence="1">
    <location>
        <begin position="45"/>
        <end position="92"/>
    </location>
</feature>
<feature type="disulfide bond" evidence="1">
    <location>
        <begin position="75"/>
        <end position="82"/>
    </location>
</feature>
<feature type="disulfide bond" evidence="1">
    <location>
        <begin position="180"/>
        <end position="209"/>
    </location>
</feature>
<comment type="function">
    <text>This protein functions as a defense against chitin containing fungal pathogens.</text>
</comment>
<comment type="catalytic activity">
    <reaction>
        <text>Random endo-hydrolysis of N-acetyl-beta-D-glucosaminide (1-&gt;4)-beta-linkages in chitin and chitodextrins.</text>
        <dbReference type="EC" id="3.2.1.14"/>
    </reaction>
</comment>
<comment type="subcellular location">
    <subcellularLocation>
        <location>Secreted</location>
        <location>Extracellular space</location>
    </subcellularLocation>
</comment>
<comment type="induction">
    <text>By salicylate and upon tobacco necrosis virus infection.</text>
</comment>
<comment type="similarity">
    <text evidence="3">Belongs to the glycosyl hydrolase 18 family. Chitinase class II subfamily.</text>
</comment>
<evidence type="ECO:0000250" key="1"/>
<evidence type="ECO:0000255" key="2">
    <source>
        <dbReference type="PROSITE-ProRule" id="PRU01258"/>
    </source>
</evidence>
<evidence type="ECO:0000305" key="3"/>
<organism>
    <name type="scientific">Cucumis sativus</name>
    <name type="common">Cucumber</name>
    <dbReference type="NCBI Taxonomy" id="3659"/>
    <lineage>
        <taxon>Eukaryota</taxon>
        <taxon>Viridiplantae</taxon>
        <taxon>Streptophyta</taxon>
        <taxon>Embryophyta</taxon>
        <taxon>Tracheophyta</taxon>
        <taxon>Spermatophyta</taxon>
        <taxon>Magnoliopsida</taxon>
        <taxon>eudicotyledons</taxon>
        <taxon>Gunneridae</taxon>
        <taxon>Pentapetalae</taxon>
        <taxon>rosids</taxon>
        <taxon>fabids</taxon>
        <taxon>Cucurbitales</taxon>
        <taxon>Cucurbitaceae</taxon>
        <taxon>Benincaseae</taxon>
        <taxon>Cucumis</taxon>
    </lineage>
</organism>